<name>YGW4_YEAST</name>
<feature type="chain" id="PRO_0000202718" description="Putative uncharacterized protein YGL214W">
    <location>
        <begin position="1"/>
        <end position="161"/>
    </location>
</feature>
<feature type="transmembrane region" description="Helical" evidence="1">
    <location>
        <begin position="76"/>
        <end position="94"/>
    </location>
</feature>
<accession>P53087</accession>
<keyword id="KW-0472">Membrane</keyword>
<keyword id="KW-0812">Transmembrane</keyword>
<keyword id="KW-1133">Transmembrane helix</keyword>
<evidence type="ECO:0000255" key="1"/>
<evidence type="ECO:0000305" key="2"/>
<evidence type="ECO:0000305" key="3">
    <source>
    </source>
</evidence>
<sequence>MIVRLHAIYQDITRDYLPPASLNHLMLLSKQTQHKLSFKSAPIPDLQPFFKNFTSKTPGSAKESPCSSTAKISSSISISSQCIFNVVILSFVFTSQNLNLPSHPALHNVSPESLNDRLMTQLECANSPRLACELWVGTDKEPILSPNSVSYRVMQPNEFES</sequence>
<reference key="1">
    <citation type="journal article" date="1997" name="Yeast">
        <title>Sequence analysis of 203 kilobases from Saccharomyces cerevisiae chromosome VII.</title>
        <authorList>
            <person name="Rieger M."/>
            <person name="Brueckner M."/>
            <person name="Schaefer M."/>
            <person name="Mueller-Auer S."/>
        </authorList>
    </citation>
    <scope>NUCLEOTIDE SEQUENCE [GENOMIC DNA]</scope>
    <source>
        <strain>ATCC 204508 / S288c</strain>
    </source>
</reference>
<reference key="2">
    <citation type="journal article" date="1997" name="Yeast">
        <title>Analysis of 21.7 kb DNA sequence from the left arm of chromosome VII reveals 11 open reading frames: two correspond to new genes.</title>
        <authorList>
            <person name="Feuermann M."/>
            <person name="Simeonava L."/>
            <person name="Souciet J.-L."/>
            <person name="Potier S."/>
        </authorList>
    </citation>
    <scope>NUCLEOTIDE SEQUENCE [GENOMIC DNA]</scope>
</reference>
<reference key="3">
    <citation type="journal article" date="1997" name="Nature">
        <title>The nucleotide sequence of Saccharomyces cerevisiae chromosome VII.</title>
        <authorList>
            <person name="Tettelin H."/>
            <person name="Agostoni-Carbone M.L."/>
            <person name="Albermann K."/>
            <person name="Albers M."/>
            <person name="Arroyo J."/>
            <person name="Backes U."/>
            <person name="Barreiros T."/>
            <person name="Bertani I."/>
            <person name="Bjourson A.J."/>
            <person name="Brueckner M."/>
            <person name="Bruschi C.V."/>
            <person name="Carignani G."/>
            <person name="Castagnoli L."/>
            <person name="Cerdan E."/>
            <person name="Clemente M.L."/>
            <person name="Coblenz A."/>
            <person name="Coglievina M."/>
            <person name="Coissac E."/>
            <person name="Defoor E."/>
            <person name="Del Bino S."/>
            <person name="Delius H."/>
            <person name="Delneri D."/>
            <person name="de Wergifosse P."/>
            <person name="Dujon B."/>
            <person name="Durand P."/>
            <person name="Entian K.-D."/>
            <person name="Eraso P."/>
            <person name="Escribano V."/>
            <person name="Fabiani L."/>
            <person name="Fartmann B."/>
            <person name="Feroli F."/>
            <person name="Feuermann M."/>
            <person name="Frontali L."/>
            <person name="Garcia-Gonzalez M."/>
            <person name="Garcia-Saez M.I."/>
            <person name="Goffeau A."/>
            <person name="Guerreiro P."/>
            <person name="Hani J."/>
            <person name="Hansen M."/>
            <person name="Hebling U."/>
            <person name="Hernandez K."/>
            <person name="Heumann K."/>
            <person name="Hilger F."/>
            <person name="Hofmann B."/>
            <person name="Indge K.J."/>
            <person name="James C.M."/>
            <person name="Klima R."/>
            <person name="Koetter P."/>
            <person name="Kramer B."/>
            <person name="Kramer W."/>
            <person name="Lauquin G."/>
            <person name="Leuther H."/>
            <person name="Louis E.J."/>
            <person name="Maillier E."/>
            <person name="Marconi A."/>
            <person name="Martegani E."/>
            <person name="Mazon M.J."/>
            <person name="Mazzoni C."/>
            <person name="McReynolds A.D.K."/>
            <person name="Melchioretto P."/>
            <person name="Mewes H.-W."/>
            <person name="Minenkova O."/>
            <person name="Mueller-Auer S."/>
            <person name="Nawrocki A."/>
            <person name="Netter P."/>
            <person name="Neu R."/>
            <person name="Nombela C."/>
            <person name="Oliver S.G."/>
            <person name="Panzeri L."/>
            <person name="Paoluzi S."/>
            <person name="Plevani P."/>
            <person name="Portetelle D."/>
            <person name="Portillo F."/>
            <person name="Potier S."/>
            <person name="Purnelle B."/>
            <person name="Rieger M."/>
            <person name="Riles L."/>
            <person name="Rinaldi T."/>
            <person name="Robben J."/>
            <person name="Rodrigues-Pousada C."/>
            <person name="Rodriguez-Belmonte E."/>
            <person name="Rodriguez-Torres A.M."/>
            <person name="Rose M."/>
            <person name="Ruzzi M."/>
            <person name="Saliola M."/>
            <person name="Sanchez-Perez M."/>
            <person name="Schaefer B."/>
            <person name="Schaefer M."/>
            <person name="Scharfe M."/>
            <person name="Schmidheini T."/>
            <person name="Schreer A."/>
            <person name="Skala J."/>
            <person name="Souciet J.-L."/>
            <person name="Steensma H.Y."/>
            <person name="Talla E."/>
            <person name="Thierry A."/>
            <person name="Vandenbol M."/>
            <person name="van der Aart Q.J.M."/>
            <person name="Van Dyck L."/>
            <person name="Vanoni M."/>
            <person name="Verhasselt P."/>
            <person name="Voet M."/>
            <person name="Volckaert G."/>
            <person name="Wambutt R."/>
            <person name="Watson M.D."/>
            <person name="Weber N."/>
            <person name="Wedler E."/>
            <person name="Wedler H."/>
            <person name="Wipfli P."/>
            <person name="Wolf K."/>
            <person name="Wright L.F."/>
            <person name="Zaccaria P."/>
            <person name="Zimmermann M."/>
            <person name="Zollner A."/>
            <person name="Kleine K."/>
        </authorList>
    </citation>
    <scope>NUCLEOTIDE SEQUENCE [LARGE SCALE GENOMIC DNA]</scope>
    <source>
        <strain>ATCC 204508 / S288c</strain>
    </source>
</reference>
<reference key="4">
    <citation type="journal article" date="2014" name="G3 (Bethesda)">
        <title>The reference genome sequence of Saccharomyces cerevisiae: Then and now.</title>
        <authorList>
            <person name="Engel S.R."/>
            <person name="Dietrich F.S."/>
            <person name="Fisk D.G."/>
            <person name="Binkley G."/>
            <person name="Balakrishnan R."/>
            <person name="Costanzo M.C."/>
            <person name="Dwight S.S."/>
            <person name="Hitz B.C."/>
            <person name="Karra K."/>
            <person name="Nash R.S."/>
            <person name="Weng S."/>
            <person name="Wong E.D."/>
            <person name="Lloyd P."/>
            <person name="Skrzypek M.S."/>
            <person name="Miyasato S.R."/>
            <person name="Simison M."/>
            <person name="Cherry J.M."/>
        </authorList>
    </citation>
    <scope>GENOME REANNOTATION</scope>
    <scope>SEQUENCE REVISION TO 2</scope>
    <source>
        <strain>ATCC 204508 / S288c</strain>
    </source>
</reference>
<gene>
    <name type="ordered locus">YGL214W</name>
</gene>
<organism>
    <name type="scientific">Saccharomyces cerevisiae (strain ATCC 204508 / S288c)</name>
    <name type="common">Baker's yeast</name>
    <dbReference type="NCBI Taxonomy" id="559292"/>
    <lineage>
        <taxon>Eukaryota</taxon>
        <taxon>Fungi</taxon>
        <taxon>Dikarya</taxon>
        <taxon>Ascomycota</taxon>
        <taxon>Saccharomycotina</taxon>
        <taxon>Saccharomycetes</taxon>
        <taxon>Saccharomycetales</taxon>
        <taxon>Saccharomycetaceae</taxon>
        <taxon>Saccharomyces</taxon>
    </lineage>
</organism>
<comment type="subcellular location">
    <subcellularLocation>
        <location evidence="2">Membrane</location>
        <topology evidence="2">Single-pass membrane protein</topology>
    </subcellularLocation>
</comment>
<comment type="miscellaneous">
    <text evidence="2">Almost completely overlaps SKI8.</text>
</comment>
<comment type="caution">
    <text evidence="3">Product of a dubious gene prediction unlikely to encode a functional protein. Because of that it is not part of the S.cerevisiae S288c complete/reference proteome set.</text>
</comment>
<comment type="sequence caution" evidence="2">
    <conflict type="frameshift">
        <sequence resource="EMBL-CDS" id="CAA96929"/>
    </conflict>
</comment>
<protein>
    <recommendedName>
        <fullName>Putative uncharacterized protein YGL214W</fullName>
    </recommendedName>
</protein>
<proteinExistence type="uncertain"/>
<dbReference type="EMBL" id="Z72736">
    <property type="protein sequence ID" value="CAA96929.1"/>
    <property type="status" value="ALT_FRAME"/>
    <property type="molecule type" value="Genomic_DNA"/>
</dbReference>
<dbReference type="PIR" id="S64233">
    <property type="entry name" value="S64233"/>
</dbReference>
<dbReference type="DIP" id="DIP-1854N"/>
<dbReference type="IntAct" id="P53087">
    <property type="interactions" value="1"/>
</dbReference>
<dbReference type="MINT" id="P53087"/>
<dbReference type="STRING" id="4932.YGL214W"/>
<dbReference type="PaxDb" id="4932-YGL214W"/>
<dbReference type="EnsemblFungi" id="YGL214W_mRNA">
    <property type="protein sequence ID" value="YGL214W"/>
    <property type="gene ID" value="YGL214W"/>
</dbReference>
<dbReference type="AGR" id="SGD:S000003182"/>
<dbReference type="SGD" id="S000003182">
    <property type="gene designation" value="YGL214W"/>
</dbReference>
<dbReference type="HOGENOM" id="CLU_1645054_0_0_1"/>
<dbReference type="GO" id="GO:0016020">
    <property type="term" value="C:membrane"/>
    <property type="evidence" value="ECO:0007669"/>
    <property type="project" value="UniProtKB-SubCell"/>
</dbReference>